<gene>
    <name evidence="1" type="primary">serS</name>
    <name type="ordered locus">MmarC5_0687</name>
</gene>
<evidence type="ECO:0000255" key="1">
    <source>
        <dbReference type="HAMAP-Rule" id="MF_01278"/>
    </source>
</evidence>
<protein>
    <recommendedName>
        <fullName evidence="1">Type-2 serine--tRNA ligase</fullName>
        <ecNumber evidence="1">6.1.1.11</ecNumber>
    </recommendedName>
    <alternativeName>
        <fullName evidence="1">Seryl-tRNA synthetase</fullName>
        <shortName evidence="1">SerRS</shortName>
    </alternativeName>
    <alternativeName>
        <fullName evidence="1">Seryl-tRNA(Ser/Sec) synthetase</fullName>
    </alternativeName>
</protein>
<feature type="chain" id="PRO_1000165221" description="Type-2 serine--tRNA ligase">
    <location>
        <begin position="1"/>
        <end position="514"/>
    </location>
</feature>
<feature type="binding site" evidence="1">
    <location>
        <position position="313"/>
    </location>
    <ligand>
        <name>L-serine</name>
        <dbReference type="ChEBI" id="CHEBI:33384"/>
    </ligand>
</feature>
<feature type="binding site" evidence="1">
    <location>
        <position position="315"/>
    </location>
    <ligand>
        <name>Zn(2+)</name>
        <dbReference type="ChEBI" id="CHEBI:29105"/>
        <note>catalytic</note>
    </ligand>
</feature>
<feature type="binding site" evidence="1">
    <location>
        <begin position="344"/>
        <end position="346"/>
    </location>
    <ligand>
        <name>ATP</name>
        <dbReference type="ChEBI" id="CHEBI:30616"/>
    </ligand>
</feature>
<feature type="binding site" evidence="1">
    <location>
        <position position="344"/>
    </location>
    <ligand>
        <name>L-serine</name>
        <dbReference type="ChEBI" id="CHEBI:33384"/>
    </ligand>
</feature>
<feature type="binding site" evidence="1">
    <location>
        <begin position="355"/>
        <end position="356"/>
    </location>
    <ligand>
        <name>ATP</name>
        <dbReference type="ChEBI" id="CHEBI:30616"/>
    </ligand>
</feature>
<feature type="binding site" evidence="1">
    <location>
        <begin position="361"/>
        <end position="363"/>
    </location>
    <ligand>
        <name>L-serine</name>
        <dbReference type="ChEBI" id="CHEBI:33384"/>
    </ligand>
</feature>
<feature type="binding site" evidence="1">
    <location>
        <position position="363"/>
    </location>
    <ligand>
        <name>Zn(2+)</name>
        <dbReference type="ChEBI" id="CHEBI:29105"/>
        <note>catalytic</note>
    </ligand>
</feature>
<feature type="binding site" evidence="1">
    <location>
        <position position="470"/>
    </location>
    <ligand>
        <name>Zn(2+)</name>
        <dbReference type="ChEBI" id="CHEBI:29105"/>
        <note>catalytic</note>
    </ligand>
</feature>
<feature type="binding site" evidence="1">
    <location>
        <position position="477"/>
    </location>
    <ligand>
        <name>ATP</name>
        <dbReference type="ChEBI" id="CHEBI:30616"/>
    </ligand>
</feature>
<organism>
    <name type="scientific">Methanococcus maripaludis (strain C5 / ATCC BAA-1333)</name>
    <dbReference type="NCBI Taxonomy" id="402880"/>
    <lineage>
        <taxon>Archaea</taxon>
        <taxon>Methanobacteriati</taxon>
        <taxon>Methanobacteriota</taxon>
        <taxon>Methanomada group</taxon>
        <taxon>Methanococci</taxon>
        <taxon>Methanococcales</taxon>
        <taxon>Methanococcaceae</taxon>
        <taxon>Methanococcus</taxon>
    </lineage>
</organism>
<dbReference type="EC" id="6.1.1.11" evidence="1"/>
<dbReference type="EMBL" id="CP000609">
    <property type="protein sequence ID" value="ABO34998.1"/>
    <property type="molecule type" value="Genomic_DNA"/>
</dbReference>
<dbReference type="RefSeq" id="WP_011868452.1">
    <property type="nucleotide sequence ID" value="NC_009135.1"/>
</dbReference>
<dbReference type="SMR" id="A4FXR4"/>
<dbReference type="STRING" id="402880.MmarC5_0687"/>
<dbReference type="GeneID" id="4928284"/>
<dbReference type="KEGG" id="mmq:MmarC5_0687"/>
<dbReference type="eggNOG" id="arCOG00403">
    <property type="taxonomic scope" value="Archaea"/>
</dbReference>
<dbReference type="HOGENOM" id="CLU_542524_0_0_2"/>
<dbReference type="OrthoDB" id="115981at2157"/>
<dbReference type="UniPathway" id="UPA00906">
    <property type="reaction ID" value="UER00895"/>
</dbReference>
<dbReference type="Proteomes" id="UP000000253">
    <property type="component" value="Chromosome"/>
</dbReference>
<dbReference type="GO" id="GO:0005737">
    <property type="term" value="C:cytoplasm"/>
    <property type="evidence" value="ECO:0007669"/>
    <property type="project" value="UniProtKB-SubCell"/>
</dbReference>
<dbReference type="GO" id="GO:0005524">
    <property type="term" value="F:ATP binding"/>
    <property type="evidence" value="ECO:0007669"/>
    <property type="project" value="UniProtKB-UniRule"/>
</dbReference>
<dbReference type="GO" id="GO:0004828">
    <property type="term" value="F:serine-tRNA ligase activity"/>
    <property type="evidence" value="ECO:0007669"/>
    <property type="project" value="UniProtKB-UniRule"/>
</dbReference>
<dbReference type="GO" id="GO:0008270">
    <property type="term" value="F:zinc ion binding"/>
    <property type="evidence" value="ECO:0007669"/>
    <property type="project" value="UniProtKB-UniRule"/>
</dbReference>
<dbReference type="GO" id="GO:0016260">
    <property type="term" value="P:selenocysteine biosynthetic process"/>
    <property type="evidence" value="ECO:0007669"/>
    <property type="project" value="UniProtKB-UniRule"/>
</dbReference>
<dbReference type="GO" id="GO:0006434">
    <property type="term" value="P:seryl-tRNA aminoacylation"/>
    <property type="evidence" value="ECO:0007669"/>
    <property type="project" value="UniProtKB-UniRule"/>
</dbReference>
<dbReference type="CDD" id="cd00670">
    <property type="entry name" value="Gly_His_Pro_Ser_Thr_tRS_core"/>
    <property type="match status" value="1"/>
</dbReference>
<dbReference type="Gene3D" id="3.30.70.1920">
    <property type="match status" value="1"/>
</dbReference>
<dbReference type="Gene3D" id="3.30.930.10">
    <property type="entry name" value="Bira Bifunctional Protein, Domain 2"/>
    <property type="match status" value="1"/>
</dbReference>
<dbReference type="HAMAP" id="MF_01278">
    <property type="entry name" value="Ser_tRNA_synth_type2"/>
    <property type="match status" value="1"/>
</dbReference>
<dbReference type="InterPro" id="IPR002314">
    <property type="entry name" value="aa-tRNA-synt_IIb"/>
</dbReference>
<dbReference type="InterPro" id="IPR045864">
    <property type="entry name" value="aa-tRNA-synth_II/BPL/LPL"/>
</dbReference>
<dbReference type="InterPro" id="IPR004503">
    <property type="entry name" value="Ser-tRNA-ligase_2_arc"/>
</dbReference>
<dbReference type="InterPro" id="IPR041293">
    <property type="entry name" value="SerS_tRNA-bd"/>
</dbReference>
<dbReference type="NCBIfam" id="NF002120">
    <property type="entry name" value="PRK00960.1"/>
    <property type="match status" value="1"/>
</dbReference>
<dbReference type="NCBIfam" id="TIGR00415">
    <property type="entry name" value="serS_MJ"/>
    <property type="match status" value="1"/>
</dbReference>
<dbReference type="Pfam" id="PF00587">
    <property type="entry name" value="tRNA-synt_2b"/>
    <property type="match status" value="1"/>
</dbReference>
<dbReference type="Pfam" id="PF18490">
    <property type="entry name" value="tRNA_bind_4"/>
    <property type="match status" value="1"/>
</dbReference>
<dbReference type="SUPFAM" id="SSF55681">
    <property type="entry name" value="Class II aaRS and biotin synthetases"/>
    <property type="match status" value="1"/>
</dbReference>
<reference key="1">
    <citation type="submission" date="2007-03" db="EMBL/GenBank/DDBJ databases">
        <title>Complete sequence of chromosome of Methanococcus maripaludis C5.</title>
        <authorList>
            <consortium name="US DOE Joint Genome Institute"/>
            <person name="Copeland A."/>
            <person name="Lucas S."/>
            <person name="Lapidus A."/>
            <person name="Barry K."/>
            <person name="Glavina del Rio T."/>
            <person name="Dalin E."/>
            <person name="Tice H."/>
            <person name="Pitluck S."/>
            <person name="Chertkov O."/>
            <person name="Brettin T."/>
            <person name="Bruce D."/>
            <person name="Han C."/>
            <person name="Detter J.C."/>
            <person name="Schmutz J."/>
            <person name="Larimer F."/>
            <person name="Land M."/>
            <person name="Hauser L."/>
            <person name="Kyrpides N."/>
            <person name="Mikhailova N."/>
            <person name="Sieprawska-Lupa M."/>
            <person name="Whitman W.B."/>
            <person name="Richardson P."/>
        </authorList>
    </citation>
    <scope>NUCLEOTIDE SEQUENCE [LARGE SCALE GENOMIC DNA]</scope>
    <source>
        <strain>C5 / ATCC BAA-1333</strain>
    </source>
</reference>
<comment type="function">
    <text evidence="1">Catalyzes the attachment of serine to tRNA(Ser). Is also able to aminoacylate tRNA(Sec) with serine, to form the misacylated tRNA L-seryl-tRNA(Sec), which will be further converted into selenocysteinyl-tRNA(Sec).</text>
</comment>
<comment type="catalytic activity">
    <reaction evidence="1">
        <text>tRNA(Ser) + L-serine + ATP = L-seryl-tRNA(Ser) + AMP + diphosphate + H(+)</text>
        <dbReference type="Rhea" id="RHEA:12292"/>
        <dbReference type="Rhea" id="RHEA-COMP:9669"/>
        <dbReference type="Rhea" id="RHEA-COMP:9703"/>
        <dbReference type="ChEBI" id="CHEBI:15378"/>
        <dbReference type="ChEBI" id="CHEBI:30616"/>
        <dbReference type="ChEBI" id="CHEBI:33019"/>
        <dbReference type="ChEBI" id="CHEBI:33384"/>
        <dbReference type="ChEBI" id="CHEBI:78442"/>
        <dbReference type="ChEBI" id="CHEBI:78533"/>
        <dbReference type="ChEBI" id="CHEBI:456215"/>
        <dbReference type="EC" id="6.1.1.11"/>
    </reaction>
</comment>
<comment type="catalytic activity">
    <reaction evidence="1">
        <text>tRNA(Sec) + L-serine + ATP = L-seryl-tRNA(Sec) + AMP + diphosphate + H(+)</text>
        <dbReference type="Rhea" id="RHEA:42580"/>
        <dbReference type="Rhea" id="RHEA-COMP:9742"/>
        <dbReference type="Rhea" id="RHEA-COMP:10128"/>
        <dbReference type="ChEBI" id="CHEBI:15378"/>
        <dbReference type="ChEBI" id="CHEBI:30616"/>
        <dbReference type="ChEBI" id="CHEBI:33019"/>
        <dbReference type="ChEBI" id="CHEBI:33384"/>
        <dbReference type="ChEBI" id="CHEBI:78442"/>
        <dbReference type="ChEBI" id="CHEBI:78533"/>
        <dbReference type="ChEBI" id="CHEBI:456215"/>
        <dbReference type="EC" id="6.1.1.11"/>
    </reaction>
</comment>
<comment type="cofactor">
    <cofactor evidence="1">
        <name>Zn(2+)</name>
        <dbReference type="ChEBI" id="CHEBI:29105"/>
    </cofactor>
    <text evidence="1">Binds 1 Zn(2+) ion per subunit. This ion is coordinated with 2 cysteines, 1 glutamate and a water molecule that dissociates from the zinc ion to allow the coordination of the amino group of the serine substrate, which is essential for catalysis.</text>
</comment>
<comment type="pathway">
    <text evidence="1">Aminoacyl-tRNA biosynthesis; selenocysteinyl-tRNA(Sec) biosynthesis; L-seryl-tRNA(Sec) from L-serine and tRNA(Sec): step 1/1.</text>
</comment>
<comment type="subunit">
    <text evidence="1">Homodimer.</text>
</comment>
<comment type="subcellular location">
    <subcellularLocation>
        <location evidence="1">Cytoplasm</location>
    </subcellularLocation>
</comment>
<comment type="domain">
    <text evidence="1">Consists of two distinct domains, a catalytic core and a N-terminal extension that is presumably involved in tRNA binding.</text>
</comment>
<comment type="similarity">
    <text evidence="1">Belongs to the class-II aminoacyl-tRNA synthetase family. Type-2 seryl-tRNA synthetase subfamily.</text>
</comment>
<sequence>MRFKLDGRIIFSKDVEEETQKDIVEVLENRDIFLKGVPEGKENEASKIETYEFDGKDLKLKMTSGTYTRAHEGIVRLKKPIMEKVGRKHQIGIRDVAIDKYIVTLTAEPSKVSELKGLKVPECEVELESEKINIVFENLGDGELKRNIIDRAIKFVKNELDKQDQDLTFEVCKIAPGTIVSDYKAKREITFDTDPTELAEPYGWVKRFPGRGQWFYTAPMAKLFRAFESIIIEECIDKIGFDECLFPKLIPLDVMYKMRYLEGLPEGMYYVCPPKREPEMFQDFVNEMMIKKEIPIEKLKTLLRDPAYVLAPAQCEPFYTFFDHELVDVDHPSKFFDKSGWTYRWEGGGAKGLDRVNEFLRGECVWMGTPEFVEKVRDDTLKYAEKLAEKLDLEYWTEVGDDPFYLEGRKSEARGIEFPDVPKYEMRLWLPHVKEERKGVAVTSANIHGTHFVEGFGIKDYKERKVWTGCTGYGLTRWVIGFLAQYGYNYDDWPELIQKKVGKLPEIPKVITWP</sequence>
<accession>A4FXR4</accession>
<name>SYS2_METM5</name>
<keyword id="KW-0030">Aminoacyl-tRNA synthetase</keyword>
<keyword id="KW-0067">ATP-binding</keyword>
<keyword id="KW-0963">Cytoplasm</keyword>
<keyword id="KW-0436">Ligase</keyword>
<keyword id="KW-0479">Metal-binding</keyword>
<keyword id="KW-0547">Nucleotide-binding</keyword>
<keyword id="KW-0648">Protein biosynthesis</keyword>
<keyword id="KW-0862">Zinc</keyword>
<proteinExistence type="inferred from homology"/>